<name>TFP11_PANTR</name>
<evidence type="ECO:0000250" key="1"/>
<evidence type="ECO:0000250" key="2">
    <source>
        <dbReference type="UniProtKB" id="Q5U2Y6"/>
    </source>
</evidence>
<evidence type="ECO:0000250" key="3">
    <source>
        <dbReference type="UniProtKB" id="Q9UBB9"/>
    </source>
</evidence>
<evidence type="ECO:0000255" key="4">
    <source>
        <dbReference type="PROSITE-ProRule" id="PRU00092"/>
    </source>
</evidence>
<evidence type="ECO:0000256" key="5">
    <source>
        <dbReference type="SAM" id="MobiDB-lite"/>
    </source>
</evidence>
<evidence type="ECO:0000305" key="6"/>
<gene>
    <name type="primary">TFIP11</name>
    <name type="synonym">STIP</name>
</gene>
<sequence>MSLSHLYRDGEGRIDDDDDERENFEITDWDLQNEFNPNRQRHWQTKEEATYGVWAERDSDDERPSFGGKRARDYSAPVNFISAGLKKGAAEEAELEDSDDEEKPVKQDDFPKDFGPRKLKTGGNFKPSQKGFAGGTKSFMDFGSWERHTKGIGQKLLQKMGYVPGRGLGKNAQGIINPIEAKQRKGKGAVGAYGSERTTQSMQDFPVVDSEEEAEEEFQKELSQWRKDPSGSKKKPKYSYKTVEELKAKGRISKKLTAPQKELSQVKVIDMTGREQKVYYSYSQISHKHNVPDDGLPLQSQQLPQSGKEAKAPGFALPELEHNLQLLIDLTEQEIIQNDRQLQYERDMVVNLFHELEKMTEVLDHEERVISNLSKVLEMVEECERRMQPDCSNPLTLDECARIFETLQDKYYEEYRMSDRVDLAVAIVYPLMKEYFKEWDPLRDCTYGTEIISKWKSLLENDQLLSHGGQDLSADAFHRLIWEVWMPFVRNIVTQWQPRNCDPMVDFLDSWVHIIPVWILDNILDQLIFPKLQKEVENWNPLTDTVPIHSWIHPWLPLMQARLEPLYSPIRSKLSSALQKWHPSDSSAKLILQPWKDVFTPGSWEAFMVKNIVPKLGMCLGELVINPHQQHMDAFYWVIDWEGMISVSSLVGLLEKHFFPKWLQVLCSWLSNSPNYEEITKWYLGWKSMFSDQVLAHPSVKDKFNEALDIMNRAVSSNVGAYMQPGARENIAYLTHTERRKDFQYEAMQERREAENMAQRGIGVAASSVPMNFKDLIETKAEEHNIVFMPVIGKRHEGKQLYTFGRIVIYIDRGVVFVQGEKTWVPTSLQSLIDMAK</sequence>
<proteinExistence type="evidence at transcript level"/>
<accession>A1XD93</accession>
<dbReference type="EMBL" id="DQ342026">
    <property type="protein sequence ID" value="ABC69918.1"/>
    <property type="molecule type" value="mRNA"/>
</dbReference>
<dbReference type="RefSeq" id="NP_001073621.1">
    <property type="nucleotide sequence ID" value="NM_001080152.1"/>
</dbReference>
<dbReference type="SMR" id="A1XD93"/>
<dbReference type="FunCoup" id="A1XD93">
    <property type="interactions" value="3118"/>
</dbReference>
<dbReference type="STRING" id="9598.ENSPTRP00000024442"/>
<dbReference type="PaxDb" id="9598-ENSPTRP00000024442"/>
<dbReference type="Ensembl" id="ENSPTRT00000026524.6">
    <property type="protein sequence ID" value="ENSPTRP00000024442.5"/>
    <property type="gene ID" value="ENSPTRG00000014196.6"/>
</dbReference>
<dbReference type="GeneID" id="458725"/>
<dbReference type="KEGG" id="ptr:458725"/>
<dbReference type="CTD" id="24144"/>
<dbReference type="VGNC" id="VGNC:5993">
    <property type="gene designation" value="TFIP11"/>
</dbReference>
<dbReference type="eggNOG" id="KOG2184">
    <property type="taxonomic scope" value="Eukaryota"/>
</dbReference>
<dbReference type="GeneTree" id="ENSGT00390000012739"/>
<dbReference type="HOGENOM" id="CLU_007977_1_1_1"/>
<dbReference type="InParanoid" id="A1XD93"/>
<dbReference type="OMA" id="CEQDIIQ"/>
<dbReference type="OrthoDB" id="6235at9604"/>
<dbReference type="TreeFam" id="TF314887"/>
<dbReference type="Proteomes" id="UP000002277">
    <property type="component" value="Chromosome 22"/>
</dbReference>
<dbReference type="Bgee" id="ENSPTRG00000014196">
    <property type="expression patterns" value="Expressed in hindlimb stylopod muscle and 22 other cell types or tissues"/>
</dbReference>
<dbReference type="GO" id="GO:0071013">
    <property type="term" value="C:catalytic step 2 spliceosome"/>
    <property type="evidence" value="ECO:0007669"/>
    <property type="project" value="Ensembl"/>
</dbReference>
<dbReference type="GO" id="GO:0000781">
    <property type="term" value="C:chromosome, telomeric region"/>
    <property type="evidence" value="ECO:0007669"/>
    <property type="project" value="Ensembl"/>
</dbReference>
<dbReference type="GO" id="GO:0005737">
    <property type="term" value="C:cytoplasm"/>
    <property type="evidence" value="ECO:0007669"/>
    <property type="project" value="UniProtKB-SubCell"/>
</dbReference>
<dbReference type="GO" id="GO:0031012">
    <property type="term" value="C:extracellular matrix"/>
    <property type="evidence" value="ECO:0007669"/>
    <property type="project" value="Ensembl"/>
</dbReference>
<dbReference type="GO" id="GO:0016607">
    <property type="term" value="C:nuclear speck"/>
    <property type="evidence" value="ECO:0007669"/>
    <property type="project" value="Ensembl"/>
</dbReference>
<dbReference type="GO" id="GO:0005730">
    <property type="term" value="C:nucleolus"/>
    <property type="evidence" value="ECO:0007669"/>
    <property type="project" value="Ensembl"/>
</dbReference>
<dbReference type="GO" id="GO:0005681">
    <property type="term" value="C:spliceosomal complex"/>
    <property type="evidence" value="ECO:0000250"/>
    <property type="project" value="UniProtKB"/>
</dbReference>
<dbReference type="GO" id="GO:0071008">
    <property type="term" value="C:U2-type post-mRNA release spliceosomal complex"/>
    <property type="evidence" value="ECO:0000250"/>
    <property type="project" value="UniProtKB"/>
</dbReference>
<dbReference type="GO" id="GO:0003676">
    <property type="term" value="F:nucleic acid binding"/>
    <property type="evidence" value="ECO:0007669"/>
    <property type="project" value="InterPro"/>
</dbReference>
<dbReference type="GO" id="GO:0031214">
    <property type="term" value="P:biomineral tissue development"/>
    <property type="evidence" value="ECO:0007669"/>
    <property type="project" value="UniProtKB-KW"/>
</dbReference>
<dbReference type="GO" id="GO:0031333">
    <property type="term" value="P:negative regulation of protein-containing complex assembly"/>
    <property type="evidence" value="ECO:0007669"/>
    <property type="project" value="Ensembl"/>
</dbReference>
<dbReference type="GO" id="GO:0000390">
    <property type="term" value="P:spliceosomal complex disassembly"/>
    <property type="evidence" value="ECO:0000250"/>
    <property type="project" value="UniProtKB"/>
</dbReference>
<dbReference type="InterPro" id="IPR000467">
    <property type="entry name" value="G_patch_dom"/>
</dbReference>
<dbReference type="InterPro" id="IPR022783">
    <property type="entry name" value="GCFC_dom"/>
</dbReference>
<dbReference type="InterPro" id="IPR022159">
    <property type="entry name" value="STIP/TFIP11_N"/>
</dbReference>
<dbReference type="InterPro" id="IPR024933">
    <property type="entry name" value="TFP11"/>
</dbReference>
<dbReference type="InterPro" id="IPR045211">
    <property type="entry name" value="TFP11/STIP/Ntr1"/>
</dbReference>
<dbReference type="PANTHER" id="PTHR23329:SF1">
    <property type="entry name" value="TUFTELIN-INTERACTING PROTEIN 11"/>
    <property type="match status" value="1"/>
</dbReference>
<dbReference type="PANTHER" id="PTHR23329">
    <property type="entry name" value="TUFTELIN-INTERACTING PROTEIN 11-RELATED"/>
    <property type="match status" value="1"/>
</dbReference>
<dbReference type="Pfam" id="PF01585">
    <property type="entry name" value="G-patch"/>
    <property type="match status" value="1"/>
</dbReference>
<dbReference type="Pfam" id="PF07842">
    <property type="entry name" value="GCFC"/>
    <property type="match status" value="1"/>
</dbReference>
<dbReference type="Pfam" id="PF12457">
    <property type="entry name" value="TIP_N"/>
    <property type="match status" value="1"/>
</dbReference>
<dbReference type="PIRSF" id="PIRSF017706">
    <property type="entry name" value="TFIP11"/>
    <property type="match status" value="1"/>
</dbReference>
<dbReference type="SMART" id="SM00443">
    <property type="entry name" value="G_patch"/>
    <property type="match status" value="1"/>
</dbReference>
<dbReference type="PROSITE" id="PS50174">
    <property type="entry name" value="G_PATCH"/>
    <property type="match status" value="1"/>
</dbReference>
<reference key="1">
    <citation type="journal article" date="2007" name="Exp. Cell Res.">
        <title>Characterization of STIP, a multi-domain nuclear protein, highly conserved in metazoans, and essential for embryogenesis in Caenorhabditis elegans.</title>
        <authorList>
            <person name="Ji Q."/>
            <person name="Huang C.-H."/>
            <person name="Peng J."/>
            <person name="Hashmi S."/>
            <person name="Ye T."/>
            <person name="Chen Y."/>
        </authorList>
    </citation>
    <scope>NUCLEOTIDE SEQUENCE [MRNA]</scope>
</reference>
<comment type="function">
    <text evidence="1">Involved in pre-mRNA splicing, specifically in spliceosome disassembly during late-stage splicing events. Intron turnover seems to proceed through reactions in two lariat-intron associated complexes termed Intron Large (IL) and Intron Small (IS). In cooperation with DHX15 seems to mediate the transition of the U2, U5 and U6 snRNP-containing IL complex to the snRNP-free IS complex leading to efficient debranching and turnover of excised introns. May play a role in the differentiation of ameloblasts and odontoblasts or in the forming of the enamel extracellular matrix (By similarity).</text>
</comment>
<comment type="subunit">
    <text evidence="1">Identified in the spliceosome C complex. Found in the Intron Large (IL) complex, a post-mRNA release spliceosomal complex containing the excised intron, U2, U5 and U6 snRNPs, and splicing factors. Interacts with TUFT1. Interacts with DHX15; indicative for a recruitment of DHX15 to the IL complex. Interacts with GCFC2 (By similarity).</text>
</comment>
<comment type="subcellular location">
    <subcellularLocation>
        <location evidence="1">Cytoplasm</location>
    </subcellularLocation>
    <subcellularLocation>
        <location evidence="1">Nucleus</location>
    </subcellularLocation>
    <text evidence="1">In the nucleus localizes to unique speckle domains in close proximity to nuclear speckles and not identical to paraspeckles.</text>
</comment>
<comment type="similarity">
    <text evidence="6">Belongs to the TFP11/STIP family.</text>
</comment>
<keyword id="KW-0091">Biomineralization</keyword>
<keyword id="KW-0963">Cytoplasm</keyword>
<keyword id="KW-0507">mRNA processing</keyword>
<keyword id="KW-0508">mRNA splicing</keyword>
<keyword id="KW-0539">Nucleus</keyword>
<keyword id="KW-0597">Phosphoprotein</keyword>
<keyword id="KW-1185">Reference proteome</keyword>
<keyword id="KW-0747">Spliceosome</keyword>
<organism>
    <name type="scientific">Pan troglodytes</name>
    <name type="common">Chimpanzee</name>
    <dbReference type="NCBI Taxonomy" id="9598"/>
    <lineage>
        <taxon>Eukaryota</taxon>
        <taxon>Metazoa</taxon>
        <taxon>Chordata</taxon>
        <taxon>Craniata</taxon>
        <taxon>Vertebrata</taxon>
        <taxon>Euteleostomi</taxon>
        <taxon>Mammalia</taxon>
        <taxon>Eutheria</taxon>
        <taxon>Euarchontoglires</taxon>
        <taxon>Primates</taxon>
        <taxon>Haplorrhini</taxon>
        <taxon>Catarrhini</taxon>
        <taxon>Hominidae</taxon>
        <taxon>Pan</taxon>
    </lineage>
</organism>
<protein>
    <recommendedName>
        <fullName>Tuftelin-interacting protein 11</fullName>
    </recommendedName>
    <alternativeName>
        <fullName>Septin and tuftelin-interacting protein 1</fullName>
        <shortName>STIP-1</shortName>
    </alternativeName>
</protein>
<feature type="chain" id="PRO_0000342274" description="Tuftelin-interacting protein 11">
    <location>
        <begin position="1"/>
        <end position="837"/>
    </location>
</feature>
<feature type="domain" description="G-patch" evidence="4">
    <location>
        <begin position="149"/>
        <end position="195"/>
    </location>
</feature>
<feature type="region of interest" description="Required for interaction with DHX15" evidence="1">
    <location>
        <begin position="1"/>
        <end position="50"/>
    </location>
</feature>
<feature type="region of interest" description="Disordered" evidence="5">
    <location>
        <begin position="1"/>
        <end position="21"/>
    </location>
</feature>
<feature type="region of interest" description="Disordered" evidence="5">
    <location>
        <begin position="53"/>
        <end position="72"/>
    </location>
</feature>
<feature type="region of interest" description="Disordered" evidence="5">
    <location>
        <begin position="85"/>
        <end position="133"/>
    </location>
</feature>
<feature type="region of interest" description="Disordered" evidence="5">
    <location>
        <begin position="179"/>
        <end position="236"/>
    </location>
</feature>
<feature type="region of interest" description="Required for nuclear speckle localization" evidence="1">
    <location>
        <begin position="710"/>
        <end position="734"/>
    </location>
</feature>
<feature type="short sequence motif" description="Nuclear localization signal" evidence="1">
    <location>
        <begin position="700"/>
        <end position="705"/>
    </location>
</feature>
<feature type="compositionally biased region" description="Basic and acidic residues" evidence="5">
    <location>
        <begin position="1"/>
        <end position="13"/>
    </location>
</feature>
<feature type="compositionally biased region" description="Basic and acidic residues" evidence="5">
    <location>
        <begin position="53"/>
        <end position="64"/>
    </location>
</feature>
<feature type="compositionally biased region" description="Acidic residues" evidence="5">
    <location>
        <begin position="91"/>
        <end position="102"/>
    </location>
</feature>
<feature type="compositionally biased region" description="Basic and acidic residues" evidence="5">
    <location>
        <begin position="103"/>
        <end position="116"/>
    </location>
</feature>
<feature type="compositionally biased region" description="Basic and acidic residues" evidence="5">
    <location>
        <begin position="217"/>
        <end position="231"/>
    </location>
</feature>
<feature type="modified residue" description="Phosphoserine" evidence="2">
    <location>
        <position position="2"/>
    </location>
</feature>
<feature type="modified residue" description="Phosphoserine" evidence="3">
    <location>
        <position position="59"/>
    </location>
</feature>
<feature type="modified residue" description="Phosphoserine" evidence="3">
    <location>
        <position position="98"/>
    </location>
</feature>
<feature type="modified residue" description="Phosphoserine" evidence="3">
    <location>
        <position position="144"/>
    </location>
</feature>
<feature type="modified residue" description="Phosphoserine" evidence="3">
    <location>
        <position position="210"/>
    </location>
</feature>